<feature type="chain" id="PRO_1000149833" description="tRNA pseudouridine synthase B">
    <location>
        <begin position="1"/>
        <end position="312"/>
    </location>
</feature>
<feature type="active site" description="Nucleophile" evidence="1">
    <location>
        <position position="47"/>
    </location>
</feature>
<proteinExistence type="inferred from homology"/>
<sequence length="312" mass="34488">MARRRKGRVIHGVILLDKPTGISSNDALQKVKRLYGAEKAGHTGALDPLATGMLPICLGEATKFSQFLLDSDKRYRVIAKLGERTDTSDSDGQVVQTRPVHVDYDTLLACIAKFRGETDQVPSMFSALKYQGRPLYEYARQGIEVPREARKITVYEIELHRFEGDEVEMEVHCSKGTYIRTIVDDLGEMLGCGAHVTMLRRVGVANYPYERMVTLEQLNALVEQAHRDEKAVADVLDPLLLPMDTAVEALPEVNVIPELMTLIQHGQAVQVSGAPSDGMVRITGGEQKLFLGVGEIDDNGKVAPKRLVVYGE</sequence>
<accession>C3LSQ0</accession>
<gene>
    <name evidence="1" type="primary">truB</name>
    <name type="ordered locus">VCM66_0603</name>
</gene>
<keyword id="KW-0413">Isomerase</keyword>
<keyword id="KW-0819">tRNA processing</keyword>
<evidence type="ECO:0000255" key="1">
    <source>
        <dbReference type="HAMAP-Rule" id="MF_01080"/>
    </source>
</evidence>
<reference key="1">
    <citation type="journal article" date="2008" name="PLoS ONE">
        <title>A recalibrated molecular clock and independent origins for the cholera pandemic clones.</title>
        <authorList>
            <person name="Feng L."/>
            <person name="Reeves P.R."/>
            <person name="Lan R."/>
            <person name="Ren Y."/>
            <person name="Gao C."/>
            <person name="Zhou Z."/>
            <person name="Ren Y."/>
            <person name="Cheng J."/>
            <person name="Wang W."/>
            <person name="Wang J."/>
            <person name="Qian W."/>
            <person name="Li D."/>
            <person name="Wang L."/>
        </authorList>
    </citation>
    <scope>NUCLEOTIDE SEQUENCE [LARGE SCALE GENOMIC DNA]</scope>
    <source>
        <strain>M66-2</strain>
    </source>
</reference>
<organism>
    <name type="scientific">Vibrio cholerae serotype O1 (strain M66-2)</name>
    <dbReference type="NCBI Taxonomy" id="579112"/>
    <lineage>
        <taxon>Bacteria</taxon>
        <taxon>Pseudomonadati</taxon>
        <taxon>Pseudomonadota</taxon>
        <taxon>Gammaproteobacteria</taxon>
        <taxon>Vibrionales</taxon>
        <taxon>Vibrionaceae</taxon>
        <taxon>Vibrio</taxon>
    </lineage>
</organism>
<comment type="function">
    <text evidence="1">Responsible for synthesis of pseudouridine from uracil-55 in the psi GC loop of transfer RNAs.</text>
</comment>
<comment type="catalytic activity">
    <reaction evidence="1">
        <text>uridine(55) in tRNA = pseudouridine(55) in tRNA</text>
        <dbReference type="Rhea" id="RHEA:42532"/>
        <dbReference type="Rhea" id="RHEA-COMP:10101"/>
        <dbReference type="Rhea" id="RHEA-COMP:10102"/>
        <dbReference type="ChEBI" id="CHEBI:65314"/>
        <dbReference type="ChEBI" id="CHEBI:65315"/>
        <dbReference type="EC" id="5.4.99.25"/>
    </reaction>
</comment>
<comment type="similarity">
    <text evidence="1">Belongs to the pseudouridine synthase TruB family. Type 1 subfamily.</text>
</comment>
<protein>
    <recommendedName>
        <fullName evidence="1">tRNA pseudouridine synthase B</fullName>
        <ecNumber evidence="1">5.4.99.25</ecNumber>
    </recommendedName>
    <alternativeName>
        <fullName evidence="1">tRNA pseudouridine(55) synthase</fullName>
        <shortName evidence="1">Psi55 synthase</shortName>
    </alternativeName>
    <alternativeName>
        <fullName evidence="1">tRNA pseudouridylate synthase</fullName>
    </alternativeName>
    <alternativeName>
        <fullName evidence="1">tRNA-uridine isomerase</fullName>
    </alternativeName>
</protein>
<dbReference type="EC" id="5.4.99.25" evidence="1"/>
<dbReference type="EMBL" id="CP001233">
    <property type="protein sequence ID" value="ACP04926.1"/>
    <property type="molecule type" value="Genomic_DNA"/>
</dbReference>
<dbReference type="RefSeq" id="WP_000124044.1">
    <property type="nucleotide sequence ID" value="NC_012578.1"/>
</dbReference>
<dbReference type="SMR" id="C3LSQ0"/>
<dbReference type="KEGG" id="vcm:VCM66_0603"/>
<dbReference type="HOGENOM" id="CLU_032087_0_3_6"/>
<dbReference type="Proteomes" id="UP000001217">
    <property type="component" value="Chromosome I"/>
</dbReference>
<dbReference type="GO" id="GO:0003723">
    <property type="term" value="F:RNA binding"/>
    <property type="evidence" value="ECO:0007669"/>
    <property type="project" value="InterPro"/>
</dbReference>
<dbReference type="GO" id="GO:0160148">
    <property type="term" value="F:tRNA pseudouridine(55) synthase activity"/>
    <property type="evidence" value="ECO:0007669"/>
    <property type="project" value="UniProtKB-EC"/>
</dbReference>
<dbReference type="GO" id="GO:1990481">
    <property type="term" value="P:mRNA pseudouridine synthesis"/>
    <property type="evidence" value="ECO:0007669"/>
    <property type="project" value="TreeGrafter"/>
</dbReference>
<dbReference type="GO" id="GO:0031119">
    <property type="term" value="P:tRNA pseudouridine synthesis"/>
    <property type="evidence" value="ECO:0007669"/>
    <property type="project" value="UniProtKB-UniRule"/>
</dbReference>
<dbReference type="CDD" id="cd02573">
    <property type="entry name" value="PseudoU_synth_EcTruB"/>
    <property type="match status" value="1"/>
</dbReference>
<dbReference type="CDD" id="cd21152">
    <property type="entry name" value="PUA_TruB_bacterial"/>
    <property type="match status" value="1"/>
</dbReference>
<dbReference type="FunFam" id="2.30.130.10:FF:000004">
    <property type="entry name" value="tRNA pseudouridine synthase B"/>
    <property type="match status" value="1"/>
</dbReference>
<dbReference type="FunFam" id="3.30.2350.10:FF:000003">
    <property type="entry name" value="tRNA pseudouridine synthase B"/>
    <property type="match status" value="1"/>
</dbReference>
<dbReference type="Gene3D" id="3.30.2350.10">
    <property type="entry name" value="Pseudouridine synthase"/>
    <property type="match status" value="1"/>
</dbReference>
<dbReference type="Gene3D" id="2.30.130.10">
    <property type="entry name" value="PUA domain"/>
    <property type="match status" value="1"/>
</dbReference>
<dbReference type="HAMAP" id="MF_01080">
    <property type="entry name" value="TruB_bact"/>
    <property type="match status" value="1"/>
</dbReference>
<dbReference type="InterPro" id="IPR020103">
    <property type="entry name" value="PsdUridine_synth_cat_dom_sf"/>
</dbReference>
<dbReference type="InterPro" id="IPR002501">
    <property type="entry name" value="PsdUridine_synth_N"/>
</dbReference>
<dbReference type="InterPro" id="IPR015947">
    <property type="entry name" value="PUA-like_sf"/>
</dbReference>
<dbReference type="InterPro" id="IPR036974">
    <property type="entry name" value="PUA_sf"/>
</dbReference>
<dbReference type="InterPro" id="IPR014780">
    <property type="entry name" value="tRNA_psdUridine_synth_TruB"/>
</dbReference>
<dbReference type="InterPro" id="IPR015240">
    <property type="entry name" value="tRNA_sdUridine_synth_fam1_C"/>
</dbReference>
<dbReference type="InterPro" id="IPR032819">
    <property type="entry name" value="TruB_C"/>
</dbReference>
<dbReference type="NCBIfam" id="TIGR00431">
    <property type="entry name" value="TruB"/>
    <property type="match status" value="1"/>
</dbReference>
<dbReference type="PANTHER" id="PTHR13767:SF2">
    <property type="entry name" value="PSEUDOURIDYLATE SYNTHASE TRUB1"/>
    <property type="match status" value="1"/>
</dbReference>
<dbReference type="PANTHER" id="PTHR13767">
    <property type="entry name" value="TRNA-PSEUDOURIDINE SYNTHASE"/>
    <property type="match status" value="1"/>
</dbReference>
<dbReference type="Pfam" id="PF09157">
    <property type="entry name" value="TruB-C_2"/>
    <property type="match status" value="1"/>
</dbReference>
<dbReference type="Pfam" id="PF16198">
    <property type="entry name" value="TruB_C_2"/>
    <property type="match status" value="1"/>
</dbReference>
<dbReference type="Pfam" id="PF01509">
    <property type="entry name" value="TruB_N"/>
    <property type="match status" value="1"/>
</dbReference>
<dbReference type="SUPFAM" id="SSF55120">
    <property type="entry name" value="Pseudouridine synthase"/>
    <property type="match status" value="1"/>
</dbReference>
<dbReference type="SUPFAM" id="SSF88697">
    <property type="entry name" value="PUA domain-like"/>
    <property type="match status" value="1"/>
</dbReference>
<name>TRUB_VIBCM</name>